<comment type="function">
    <text evidence="1">Involved in the binding of tRNA to the ribosomes.</text>
</comment>
<comment type="subunit">
    <text evidence="1">Part of the 30S ribosomal subunit.</text>
</comment>
<comment type="similarity">
    <text evidence="1">Belongs to the universal ribosomal protein uS10 family.</text>
</comment>
<feature type="chain" id="PRO_0000237019" description="Small ribosomal subunit protein uS10">
    <location>
        <begin position="1"/>
        <end position="103"/>
    </location>
</feature>
<reference key="1">
    <citation type="journal article" date="2006" name="J. Bacteriol.">
        <title>Comparison of the genome sequence of the poultry pathogen Bordetella avium with those of B. bronchiseptica, B. pertussis, and B. parapertussis reveals extensive diversity in surface structures associated with host interaction.</title>
        <authorList>
            <person name="Sebaihia M."/>
            <person name="Preston A."/>
            <person name="Maskell D.J."/>
            <person name="Kuzmiak H."/>
            <person name="Connell T.D."/>
            <person name="King N.D."/>
            <person name="Orndorff P.E."/>
            <person name="Miyamoto D.M."/>
            <person name="Thomson N.R."/>
            <person name="Harris D."/>
            <person name="Goble A."/>
            <person name="Lord A."/>
            <person name="Murphy L."/>
            <person name="Quail M.A."/>
            <person name="Rutter S."/>
            <person name="Squares R."/>
            <person name="Squares S."/>
            <person name="Woodward J."/>
            <person name="Parkhill J."/>
            <person name="Temple L.M."/>
        </authorList>
    </citation>
    <scope>NUCLEOTIDE SEQUENCE [LARGE SCALE GENOMIC DNA]</scope>
    <source>
        <strain>197N</strain>
    </source>
</reference>
<name>RS10_BORA1</name>
<keyword id="KW-1185">Reference proteome</keyword>
<keyword id="KW-0687">Ribonucleoprotein</keyword>
<keyword id="KW-0689">Ribosomal protein</keyword>
<evidence type="ECO:0000255" key="1">
    <source>
        <dbReference type="HAMAP-Rule" id="MF_00508"/>
    </source>
</evidence>
<evidence type="ECO:0000305" key="2"/>
<organism>
    <name type="scientific">Bordetella avium (strain 197N)</name>
    <dbReference type="NCBI Taxonomy" id="360910"/>
    <lineage>
        <taxon>Bacteria</taxon>
        <taxon>Pseudomonadati</taxon>
        <taxon>Pseudomonadota</taxon>
        <taxon>Betaproteobacteria</taxon>
        <taxon>Burkholderiales</taxon>
        <taxon>Alcaligenaceae</taxon>
        <taxon>Bordetella</taxon>
    </lineage>
</organism>
<sequence length="103" mass="11807">MKNQKIRIRLKAFDYKLIDQSAAEIVDTAKRTGAVVRGPVPLPTRIRRYDVLRSPHVNKTSRDQFEIRTHQRLMDIVDPTDKTVDALMRLDLPAGVDVEIALQ</sequence>
<accession>Q2L2G3</accession>
<protein>
    <recommendedName>
        <fullName evidence="1">Small ribosomal subunit protein uS10</fullName>
    </recommendedName>
    <alternativeName>
        <fullName evidence="2">30S ribosomal protein S10</fullName>
    </alternativeName>
</protein>
<dbReference type="EMBL" id="AM167904">
    <property type="protein sequence ID" value="CAJ47608.1"/>
    <property type="molecule type" value="Genomic_DNA"/>
</dbReference>
<dbReference type="RefSeq" id="WP_003806903.1">
    <property type="nucleotide sequence ID" value="NC_010645.1"/>
</dbReference>
<dbReference type="SMR" id="Q2L2G3"/>
<dbReference type="STRING" id="360910.BAV0024"/>
<dbReference type="GeneID" id="94357755"/>
<dbReference type="KEGG" id="bav:BAV0024"/>
<dbReference type="eggNOG" id="COG0051">
    <property type="taxonomic scope" value="Bacteria"/>
</dbReference>
<dbReference type="HOGENOM" id="CLU_122625_1_3_4"/>
<dbReference type="OrthoDB" id="9804464at2"/>
<dbReference type="Proteomes" id="UP000001977">
    <property type="component" value="Chromosome"/>
</dbReference>
<dbReference type="GO" id="GO:1990904">
    <property type="term" value="C:ribonucleoprotein complex"/>
    <property type="evidence" value="ECO:0007669"/>
    <property type="project" value="UniProtKB-KW"/>
</dbReference>
<dbReference type="GO" id="GO:0005840">
    <property type="term" value="C:ribosome"/>
    <property type="evidence" value="ECO:0007669"/>
    <property type="project" value="UniProtKB-KW"/>
</dbReference>
<dbReference type="GO" id="GO:0003735">
    <property type="term" value="F:structural constituent of ribosome"/>
    <property type="evidence" value="ECO:0007669"/>
    <property type="project" value="InterPro"/>
</dbReference>
<dbReference type="GO" id="GO:0000049">
    <property type="term" value="F:tRNA binding"/>
    <property type="evidence" value="ECO:0007669"/>
    <property type="project" value="UniProtKB-UniRule"/>
</dbReference>
<dbReference type="GO" id="GO:0006412">
    <property type="term" value="P:translation"/>
    <property type="evidence" value="ECO:0007669"/>
    <property type="project" value="UniProtKB-UniRule"/>
</dbReference>
<dbReference type="FunFam" id="3.30.70.600:FF:000001">
    <property type="entry name" value="30S ribosomal protein S10"/>
    <property type="match status" value="1"/>
</dbReference>
<dbReference type="Gene3D" id="3.30.70.600">
    <property type="entry name" value="Ribosomal protein S10 domain"/>
    <property type="match status" value="1"/>
</dbReference>
<dbReference type="HAMAP" id="MF_00508">
    <property type="entry name" value="Ribosomal_uS10"/>
    <property type="match status" value="1"/>
</dbReference>
<dbReference type="InterPro" id="IPR001848">
    <property type="entry name" value="Ribosomal_uS10"/>
</dbReference>
<dbReference type="InterPro" id="IPR018268">
    <property type="entry name" value="Ribosomal_uS10_CS"/>
</dbReference>
<dbReference type="InterPro" id="IPR027486">
    <property type="entry name" value="Ribosomal_uS10_dom"/>
</dbReference>
<dbReference type="InterPro" id="IPR036838">
    <property type="entry name" value="Ribosomal_uS10_dom_sf"/>
</dbReference>
<dbReference type="NCBIfam" id="NF001861">
    <property type="entry name" value="PRK00596.1"/>
    <property type="match status" value="1"/>
</dbReference>
<dbReference type="NCBIfam" id="TIGR01049">
    <property type="entry name" value="rpsJ_bact"/>
    <property type="match status" value="1"/>
</dbReference>
<dbReference type="PANTHER" id="PTHR11700">
    <property type="entry name" value="30S RIBOSOMAL PROTEIN S10 FAMILY MEMBER"/>
    <property type="match status" value="1"/>
</dbReference>
<dbReference type="Pfam" id="PF00338">
    <property type="entry name" value="Ribosomal_S10"/>
    <property type="match status" value="1"/>
</dbReference>
<dbReference type="PRINTS" id="PR00971">
    <property type="entry name" value="RIBOSOMALS10"/>
</dbReference>
<dbReference type="SMART" id="SM01403">
    <property type="entry name" value="Ribosomal_S10"/>
    <property type="match status" value="1"/>
</dbReference>
<dbReference type="SUPFAM" id="SSF54999">
    <property type="entry name" value="Ribosomal protein S10"/>
    <property type="match status" value="1"/>
</dbReference>
<dbReference type="PROSITE" id="PS00361">
    <property type="entry name" value="RIBOSOMAL_S10"/>
    <property type="match status" value="1"/>
</dbReference>
<proteinExistence type="inferred from homology"/>
<gene>
    <name evidence="1" type="primary">rpsJ</name>
    <name type="ordered locus">BAV0024</name>
</gene>